<keyword id="KW-0963">Cytoplasm</keyword>
<keyword id="KW-0560">Oxidoreductase</keyword>
<feature type="chain" id="PRO_1000008946" description="Phosphoadenosine 5'-phosphosulfate reductase">
    <location>
        <begin position="1"/>
        <end position="241"/>
    </location>
</feature>
<feature type="active site" description="Nucleophile; cysteine thiosulfonate intermediate" evidence="1">
    <location>
        <position position="235"/>
    </location>
</feature>
<reference key="1">
    <citation type="journal article" date="2005" name="Jpn. Agric. Res. Q.">
        <title>Genome sequence of Xanthomonas oryzae pv. oryzae suggests contribution of large numbers of effector genes and insertion sequences to its race diversity.</title>
        <authorList>
            <person name="Ochiai H."/>
            <person name="Inoue Y."/>
            <person name="Takeya M."/>
            <person name="Sasaki A."/>
            <person name="Kaku H."/>
        </authorList>
    </citation>
    <scope>NUCLEOTIDE SEQUENCE [LARGE SCALE GENOMIC DNA]</scope>
    <source>
        <strain>MAFF 311018</strain>
    </source>
</reference>
<name>CYSH_XANOM</name>
<protein>
    <recommendedName>
        <fullName evidence="1">Phosphoadenosine 5'-phosphosulfate reductase</fullName>
        <shortName evidence="1">PAPS reductase</shortName>
        <ecNumber evidence="1">1.8.4.8</ecNumber>
    </recommendedName>
    <alternativeName>
        <fullName evidence="1">3'-phosphoadenylylsulfate reductase</fullName>
    </alternativeName>
    <alternativeName>
        <fullName evidence="1">PAPS reductase, thioredoxin dependent</fullName>
    </alternativeName>
    <alternativeName>
        <fullName evidence="1">PAPS sulfotransferase</fullName>
    </alternativeName>
    <alternativeName>
        <fullName evidence="1">PAdoPS reductase</fullName>
    </alternativeName>
</protein>
<gene>
    <name evidence="1" type="primary">cysH</name>
    <name type="ordered locus">XOO3201</name>
</gene>
<comment type="function">
    <text evidence="1">Catalyzes the formation of sulfite from phosphoadenosine 5'-phosphosulfate (PAPS) using thioredoxin as an electron donor.</text>
</comment>
<comment type="catalytic activity">
    <reaction evidence="1">
        <text>[thioredoxin]-disulfide + sulfite + adenosine 3',5'-bisphosphate + 2 H(+) = [thioredoxin]-dithiol + 3'-phosphoadenylyl sulfate</text>
        <dbReference type="Rhea" id="RHEA:11724"/>
        <dbReference type="Rhea" id="RHEA-COMP:10698"/>
        <dbReference type="Rhea" id="RHEA-COMP:10700"/>
        <dbReference type="ChEBI" id="CHEBI:15378"/>
        <dbReference type="ChEBI" id="CHEBI:17359"/>
        <dbReference type="ChEBI" id="CHEBI:29950"/>
        <dbReference type="ChEBI" id="CHEBI:50058"/>
        <dbReference type="ChEBI" id="CHEBI:58339"/>
        <dbReference type="ChEBI" id="CHEBI:58343"/>
        <dbReference type="EC" id="1.8.4.8"/>
    </reaction>
</comment>
<comment type="pathway">
    <text evidence="1">Sulfur metabolism; hydrogen sulfide biosynthesis; sulfite from sulfate: step 3/3.</text>
</comment>
<comment type="subcellular location">
    <subcellularLocation>
        <location evidence="1">Cytoplasm</location>
    </subcellularLocation>
</comment>
<comment type="similarity">
    <text evidence="1">Belongs to the PAPS reductase family. CysH subfamily.</text>
</comment>
<organism>
    <name type="scientific">Xanthomonas oryzae pv. oryzae (strain MAFF 311018)</name>
    <dbReference type="NCBI Taxonomy" id="342109"/>
    <lineage>
        <taxon>Bacteria</taxon>
        <taxon>Pseudomonadati</taxon>
        <taxon>Pseudomonadota</taxon>
        <taxon>Gammaproteobacteria</taxon>
        <taxon>Lysobacterales</taxon>
        <taxon>Lysobacteraceae</taxon>
        <taxon>Xanthomonas</taxon>
    </lineage>
</organism>
<sequence>MTALPAASITSSALDDLDALNAQLEGLRADERVAWALQHGPQDAALSSSFGAQSAVTLHLLSQQRPDIPVILIDTGYLFPETYRFADALTERLKLNLKVYRPLVSRAWMEARHGRLWEQGMVGIDQYNNLRKVEPMRRALDELNVGTWFTGLRRSQSGGRAQTPIVQKRGERYKISPIADWTDRDVWQYLQAHELPYHPLWEQGYVSIGDFHTTRRWEPGMREEDTRFFGLKRECGIHEDI</sequence>
<proteinExistence type="inferred from homology"/>
<dbReference type="EC" id="1.8.4.8" evidence="1"/>
<dbReference type="EMBL" id="AP008229">
    <property type="protein sequence ID" value="BAE69956.1"/>
    <property type="molecule type" value="Genomic_DNA"/>
</dbReference>
<dbReference type="RefSeq" id="WP_011259873.1">
    <property type="nucleotide sequence ID" value="NC_007705.1"/>
</dbReference>
<dbReference type="SMR" id="Q2P0H1"/>
<dbReference type="KEGG" id="xom:XOO3201"/>
<dbReference type="HOGENOM" id="CLU_044089_3_0_6"/>
<dbReference type="UniPathway" id="UPA00140">
    <property type="reaction ID" value="UER00206"/>
</dbReference>
<dbReference type="GO" id="GO:0005737">
    <property type="term" value="C:cytoplasm"/>
    <property type="evidence" value="ECO:0007669"/>
    <property type="project" value="UniProtKB-SubCell"/>
</dbReference>
<dbReference type="GO" id="GO:0004604">
    <property type="term" value="F:phosphoadenylyl-sulfate reductase (thioredoxin) activity"/>
    <property type="evidence" value="ECO:0007669"/>
    <property type="project" value="UniProtKB-UniRule"/>
</dbReference>
<dbReference type="GO" id="GO:0070814">
    <property type="term" value="P:hydrogen sulfide biosynthetic process"/>
    <property type="evidence" value="ECO:0007669"/>
    <property type="project" value="UniProtKB-UniRule"/>
</dbReference>
<dbReference type="GO" id="GO:0019379">
    <property type="term" value="P:sulfate assimilation, phosphoadenylyl sulfate reduction by phosphoadenylyl-sulfate reductase (thioredoxin)"/>
    <property type="evidence" value="ECO:0007669"/>
    <property type="project" value="UniProtKB-UniRule"/>
</dbReference>
<dbReference type="CDD" id="cd23945">
    <property type="entry name" value="PAPS_reductase"/>
    <property type="match status" value="1"/>
</dbReference>
<dbReference type="FunFam" id="3.40.50.620:FF:000043">
    <property type="entry name" value="Phosphoadenosine phosphosulfate reductase"/>
    <property type="match status" value="1"/>
</dbReference>
<dbReference type="Gene3D" id="3.40.50.620">
    <property type="entry name" value="HUPs"/>
    <property type="match status" value="1"/>
</dbReference>
<dbReference type="HAMAP" id="MF_00063">
    <property type="entry name" value="CysH"/>
    <property type="match status" value="1"/>
</dbReference>
<dbReference type="InterPro" id="IPR004511">
    <property type="entry name" value="PAPS/APS_Rdtase"/>
</dbReference>
<dbReference type="InterPro" id="IPR002500">
    <property type="entry name" value="PAPS_reduct_dom"/>
</dbReference>
<dbReference type="InterPro" id="IPR011800">
    <property type="entry name" value="PAPS_reductase_CysH"/>
</dbReference>
<dbReference type="InterPro" id="IPR014729">
    <property type="entry name" value="Rossmann-like_a/b/a_fold"/>
</dbReference>
<dbReference type="NCBIfam" id="TIGR00434">
    <property type="entry name" value="cysH"/>
    <property type="match status" value="1"/>
</dbReference>
<dbReference type="NCBIfam" id="TIGR02057">
    <property type="entry name" value="PAPS_reductase"/>
    <property type="match status" value="1"/>
</dbReference>
<dbReference type="NCBIfam" id="NF002537">
    <property type="entry name" value="PRK02090.1"/>
    <property type="match status" value="1"/>
</dbReference>
<dbReference type="PANTHER" id="PTHR46509">
    <property type="entry name" value="PHOSPHOADENOSINE PHOSPHOSULFATE REDUCTASE"/>
    <property type="match status" value="1"/>
</dbReference>
<dbReference type="PANTHER" id="PTHR46509:SF1">
    <property type="entry name" value="PHOSPHOADENOSINE PHOSPHOSULFATE REDUCTASE"/>
    <property type="match status" value="1"/>
</dbReference>
<dbReference type="Pfam" id="PF01507">
    <property type="entry name" value="PAPS_reduct"/>
    <property type="match status" value="1"/>
</dbReference>
<dbReference type="PIRSF" id="PIRSF000857">
    <property type="entry name" value="PAPS_reductase"/>
    <property type="match status" value="1"/>
</dbReference>
<dbReference type="SUPFAM" id="SSF52402">
    <property type="entry name" value="Adenine nucleotide alpha hydrolases-like"/>
    <property type="match status" value="1"/>
</dbReference>
<evidence type="ECO:0000255" key="1">
    <source>
        <dbReference type="HAMAP-Rule" id="MF_00063"/>
    </source>
</evidence>
<accession>Q2P0H1</accession>